<feature type="chain" id="PRO_1000132081" description="5-oxoprolinase subunit A">
    <location>
        <begin position="1"/>
        <end position="245"/>
    </location>
</feature>
<accession>B1JRA7</accession>
<sequence length="245" mass="26281">MKIDLNADLGEGCANDQALLQLVSSANIACGFHAGDAQTMRQSVRWALEYGVAIGAHPSFPDRENFGRTAMQLPPETVYAQVVYQLGALAAIVQVEGGVMQHVKPHGMLYNQAAVDPLLADAIAQAVKAVDPSLRLVGLAGSELIRAGTRVGLVTRQEVFADRHYQPDGTLVPRSQPDALIESDELALSQTLAMVQQHQVQACDGSWVQVQADTVCVHGDGVQALAFARCLRDRFQQEGISVIAQ</sequence>
<evidence type="ECO:0000255" key="1">
    <source>
        <dbReference type="HAMAP-Rule" id="MF_00691"/>
    </source>
</evidence>
<protein>
    <recommendedName>
        <fullName evidence="1">5-oxoprolinase subunit A</fullName>
        <shortName evidence="1">5-OPase subunit A</shortName>
        <ecNumber evidence="1">3.5.2.9</ecNumber>
    </recommendedName>
    <alternativeName>
        <fullName evidence="1">5-oxoprolinase (ATP-hydrolyzing) subunit A</fullName>
    </alternativeName>
</protein>
<reference key="1">
    <citation type="submission" date="2008-02" db="EMBL/GenBank/DDBJ databases">
        <title>Complete sequence of Yersinia pseudotuberculosis YPIII.</title>
        <authorList>
            <consortium name="US DOE Joint Genome Institute"/>
            <person name="Copeland A."/>
            <person name="Lucas S."/>
            <person name="Lapidus A."/>
            <person name="Glavina del Rio T."/>
            <person name="Dalin E."/>
            <person name="Tice H."/>
            <person name="Bruce D."/>
            <person name="Goodwin L."/>
            <person name="Pitluck S."/>
            <person name="Munk A.C."/>
            <person name="Brettin T."/>
            <person name="Detter J.C."/>
            <person name="Han C."/>
            <person name="Tapia R."/>
            <person name="Schmutz J."/>
            <person name="Larimer F."/>
            <person name="Land M."/>
            <person name="Hauser L."/>
            <person name="Challacombe J.F."/>
            <person name="Green L."/>
            <person name="Lindler L.E."/>
            <person name="Nikolich M.P."/>
            <person name="Richardson P."/>
        </authorList>
    </citation>
    <scope>NUCLEOTIDE SEQUENCE [LARGE SCALE GENOMIC DNA]</scope>
    <source>
        <strain>YPIII</strain>
    </source>
</reference>
<comment type="function">
    <text evidence="1">Catalyzes the cleavage of 5-oxoproline to form L-glutamate coupled to the hydrolysis of ATP to ADP and inorganic phosphate.</text>
</comment>
<comment type="catalytic activity">
    <reaction evidence="1">
        <text>5-oxo-L-proline + ATP + 2 H2O = L-glutamate + ADP + phosphate + H(+)</text>
        <dbReference type="Rhea" id="RHEA:10348"/>
        <dbReference type="ChEBI" id="CHEBI:15377"/>
        <dbReference type="ChEBI" id="CHEBI:15378"/>
        <dbReference type="ChEBI" id="CHEBI:29985"/>
        <dbReference type="ChEBI" id="CHEBI:30616"/>
        <dbReference type="ChEBI" id="CHEBI:43474"/>
        <dbReference type="ChEBI" id="CHEBI:58402"/>
        <dbReference type="ChEBI" id="CHEBI:456216"/>
        <dbReference type="EC" id="3.5.2.9"/>
    </reaction>
</comment>
<comment type="subunit">
    <text evidence="1">Forms a complex composed of PxpA, PxpB and PxpC.</text>
</comment>
<comment type="similarity">
    <text evidence="1">Belongs to the LamB/PxpA family.</text>
</comment>
<proteinExistence type="inferred from homology"/>
<name>PXPA_YERPY</name>
<keyword id="KW-0067">ATP-binding</keyword>
<keyword id="KW-0378">Hydrolase</keyword>
<keyword id="KW-0547">Nucleotide-binding</keyword>
<dbReference type="EC" id="3.5.2.9" evidence="1"/>
<dbReference type="EMBL" id="CP000950">
    <property type="protein sequence ID" value="ACA67467.1"/>
    <property type="molecule type" value="Genomic_DNA"/>
</dbReference>
<dbReference type="RefSeq" id="WP_002209659.1">
    <property type="nucleotide sequence ID" value="NZ_CP009792.1"/>
</dbReference>
<dbReference type="SMR" id="B1JRA7"/>
<dbReference type="GeneID" id="57975991"/>
<dbReference type="KEGG" id="ypy:YPK_1169"/>
<dbReference type="PATRIC" id="fig|502800.11.peg.1805"/>
<dbReference type="GO" id="GO:0017168">
    <property type="term" value="F:5-oxoprolinase (ATP-hydrolyzing) activity"/>
    <property type="evidence" value="ECO:0007669"/>
    <property type="project" value="UniProtKB-UniRule"/>
</dbReference>
<dbReference type="GO" id="GO:0005524">
    <property type="term" value="F:ATP binding"/>
    <property type="evidence" value="ECO:0007669"/>
    <property type="project" value="UniProtKB-UniRule"/>
</dbReference>
<dbReference type="GO" id="GO:0005975">
    <property type="term" value="P:carbohydrate metabolic process"/>
    <property type="evidence" value="ECO:0007669"/>
    <property type="project" value="InterPro"/>
</dbReference>
<dbReference type="CDD" id="cd10800">
    <property type="entry name" value="LamB_YcsF_YbgL_like"/>
    <property type="match status" value="1"/>
</dbReference>
<dbReference type="Gene3D" id="3.20.20.370">
    <property type="entry name" value="Glycoside hydrolase/deacetylase"/>
    <property type="match status" value="1"/>
</dbReference>
<dbReference type="HAMAP" id="MF_00691">
    <property type="entry name" value="PxpA"/>
    <property type="match status" value="1"/>
</dbReference>
<dbReference type="InterPro" id="IPR011330">
    <property type="entry name" value="Glyco_hydro/deAcase_b/a-brl"/>
</dbReference>
<dbReference type="InterPro" id="IPR005501">
    <property type="entry name" value="LamB/YcsF/PxpA-like"/>
</dbReference>
<dbReference type="NCBIfam" id="NF003812">
    <property type="entry name" value="PRK05406.1-1"/>
    <property type="match status" value="1"/>
</dbReference>
<dbReference type="NCBIfam" id="NF003814">
    <property type="entry name" value="PRK05406.1-3"/>
    <property type="match status" value="1"/>
</dbReference>
<dbReference type="NCBIfam" id="NF003815">
    <property type="entry name" value="PRK05406.1-4"/>
    <property type="match status" value="1"/>
</dbReference>
<dbReference type="NCBIfam" id="NF003816">
    <property type="entry name" value="PRK05406.1-5"/>
    <property type="match status" value="1"/>
</dbReference>
<dbReference type="PANTHER" id="PTHR30292:SF0">
    <property type="entry name" value="5-OXOPROLINASE SUBUNIT A"/>
    <property type="match status" value="1"/>
</dbReference>
<dbReference type="PANTHER" id="PTHR30292">
    <property type="entry name" value="UNCHARACTERIZED PROTEIN YBGL-RELATED"/>
    <property type="match status" value="1"/>
</dbReference>
<dbReference type="Pfam" id="PF03746">
    <property type="entry name" value="LamB_YcsF"/>
    <property type="match status" value="1"/>
</dbReference>
<dbReference type="SUPFAM" id="SSF88713">
    <property type="entry name" value="Glycoside hydrolase/deacetylase"/>
    <property type="match status" value="1"/>
</dbReference>
<organism>
    <name type="scientific">Yersinia pseudotuberculosis serotype O:3 (strain YPIII)</name>
    <dbReference type="NCBI Taxonomy" id="502800"/>
    <lineage>
        <taxon>Bacteria</taxon>
        <taxon>Pseudomonadati</taxon>
        <taxon>Pseudomonadota</taxon>
        <taxon>Gammaproteobacteria</taxon>
        <taxon>Enterobacterales</taxon>
        <taxon>Yersiniaceae</taxon>
        <taxon>Yersinia</taxon>
    </lineage>
</organism>
<gene>
    <name evidence="1" type="primary">pxpA</name>
    <name type="ordered locus">YPK_1169</name>
</gene>